<organism>
    <name type="scientific">Arabidopsis thaliana</name>
    <name type="common">Mouse-ear cress</name>
    <dbReference type="NCBI Taxonomy" id="3702"/>
    <lineage>
        <taxon>Eukaryota</taxon>
        <taxon>Viridiplantae</taxon>
        <taxon>Streptophyta</taxon>
        <taxon>Embryophyta</taxon>
        <taxon>Tracheophyta</taxon>
        <taxon>Spermatophyta</taxon>
        <taxon>Magnoliopsida</taxon>
        <taxon>eudicotyledons</taxon>
        <taxon>Gunneridae</taxon>
        <taxon>Pentapetalae</taxon>
        <taxon>rosids</taxon>
        <taxon>malvids</taxon>
        <taxon>Brassicales</taxon>
        <taxon>Brassicaceae</taxon>
        <taxon>Camelineae</taxon>
        <taxon>Arabidopsis</taxon>
    </lineage>
</organism>
<protein>
    <recommendedName>
        <fullName>Putative FBD-associated F-box protein At1g55030</fullName>
    </recommendedName>
</protein>
<sequence>MNNRGAVTDMISQLPEPLILQILGSLPTKVAITTSVLSKQWQSHWKMMPKLEFDSFLRRLDLENVTKCLLSHKAPVLQTFSLKVRLDRRNNAVDIGCLIGIAMTRNVRKLVLEVYFHRGTFTFPRSLYHCETLETLELILNVVMDVPPSVYLKSLKTLYLLAVDFKDDESVINLLSGCPNLQDLVMRRNSSSNVKTFTIAVPSLQRLAIHNGSGTPQHCGYTINTPSLKYLKLEGSKAFESFMVENVSELIEVNITDVSEIIDEKLRVFLTSVTRLSLALSPSVFTFPTGIIFNQLVYLEICTNKTSWWKLLPLMLHSSPKLQVLKLIDDTDGMNYVEASGEWNQPKNVPECLHHLEKFIWEGYKWKREEIEVAKYILKNTNRLKRAIFSLKGISSEDRLVVVEDLKSVVMATTNSCQFQFI</sequence>
<evidence type="ECO:0000255" key="1">
    <source>
        <dbReference type="PROSITE-ProRule" id="PRU00080"/>
    </source>
</evidence>
<reference key="1">
    <citation type="journal article" date="2000" name="Nature">
        <title>Sequence and analysis of chromosome 1 of the plant Arabidopsis thaliana.</title>
        <authorList>
            <person name="Theologis A."/>
            <person name="Ecker J.R."/>
            <person name="Palm C.J."/>
            <person name="Federspiel N.A."/>
            <person name="Kaul S."/>
            <person name="White O."/>
            <person name="Alonso J."/>
            <person name="Altafi H."/>
            <person name="Araujo R."/>
            <person name="Bowman C.L."/>
            <person name="Brooks S.Y."/>
            <person name="Buehler E."/>
            <person name="Chan A."/>
            <person name="Chao Q."/>
            <person name="Chen H."/>
            <person name="Cheuk R.F."/>
            <person name="Chin C.W."/>
            <person name="Chung M.K."/>
            <person name="Conn L."/>
            <person name="Conway A.B."/>
            <person name="Conway A.R."/>
            <person name="Creasy T.H."/>
            <person name="Dewar K."/>
            <person name="Dunn P."/>
            <person name="Etgu P."/>
            <person name="Feldblyum T.V."/>
            <person name="Feng J.-D."/>
            <person name="Fong B."/>
            <person name="Fujii C.Y."/>
            <person name="Gill J.E."/>
            <person name="Goldsmith A.D."/>
            <person name="Haas B."/>
            <person name="Hansen N.F."/>
            <person name="Hughes B."/>
            <person name="Huizar L."/>
            <person name="Hunter J.L."/>
            <person name="Jenkins J."/>
            <person name="Johnson-Hopson C."/>
            <person name="Khan S."/>
            <person name="Khaykin E."/>
            <person name="Kim C.J."/>
            <person name="Koo H.L."/>
            <person name="Kremenetskaia I."/>
            <person name="Kurtz D.B."/>
            <person name="Kwan A."/>
            <person name="Lam B."/>
            <person name="Langin-Hooper S."/>
            <person name="Lee A."/>
            <person name="Lee J.M."/>
            <person name="Lenz C.A."/>
            <person name="Li J.H."/>
            <person name="Li Y.-P."/>
            <person name="Lin X."/>
            <person name="Liu S.X."/>
            <person name="Liu Z.A."/>
            <person name="Luros J.S."/>
            <person name="Maiti R."/>
            <person name="Marziali A."/>
            <person name="Militscher J."/>
            <person name="Miranda M."/>
            <person name="Nguyen M."/>
            <person name="Nierman W.C."/>
            <person name="Osborne B.I."/>
            <person name="Pai G."/>
            <person name="Peterson J."/>
            <person name="Pham P.K."/>
            <person name="Rizzo M."/>
            <person name="Rooney T."/>
            <person name="Rowley D."/>
            <person name="Sakano H."/>
            <person name="Salzberg S.L."/>
            <person name="Schwartz J.R."/>
            <person name="Shinn P."/>
            <person name="Southwick A.M."/>
            <person name="Sun H."/>
            <person name="Tallon L.J."/>
            <person name="Tambunga G."/>
            <person name="Toriumi M.J."/>
            <person name="Town C.D."/>
            <person name="Utterback T."/>
            <person name="Van Aken S."/>
            <person name="Vaysberg M."/>
            <person name="Vysotskaia V.S."/>
            <person name="Walker M."/>
            <person name="Wu D."/>
            <person name="Yu G."/>
            <person name="Fraser C.M."/>
            <person name="Venter J.C."/>
            <person name="Davis R.W."/>
        </authorList>
    </citation>
    <scope>NUCLEOTIDE SEQUENCE [LARGE SCALE GENOMIC DNA]</scope>
    <source>
        <strain>cv. Columbia</strain>
    </source>
</reference>
<reference key="2">
    <citation type="journal article" date="2017" name="Plant J.">
        <title>Araport11: a complete reannotation of the Arabidopsis thaliana reference genome.</title>
        <authorList>
            <person name="Cheng C.Y."/>
            <person name="Krishnakumar V."/>
            <person name="Chan A.P."/>
            <person name="Thibaud-Nissen F."/>
            <person name="Schobel S."/>
            <person name="Town C.D."/>
        </authorList>
    </citation>
    <scope>GENOME REANNOTATION</scope>
    <source>
        <strain>cv. Columbia</strain>
    </source>
</reference>
<gene>
    <name type="ordered locus">At1g55030</name>
    <name type="ORF">F14C21.30</name>
</gene>
<dbReference type="EMBL" id="AC069144">
    <property type="protein sequence ID" value="AAG51107.1"/>
    <property type="molecule type" value="Genomic_DNA"/>
</dbReference>
<dbReference type="EMBL" id="CP002684">
    <property type="protein sequence ID" value="AEE33176.1"/>
    <property type="molecule type" value="Genomic_DNA"/>
</dbReference>
<dbReference type="PIR" id="H96591">
    <property type="entry name" value="H96591"/>
</dbReference>
<dbReference type="RefSeq" id="NP_175901.1">
    <property type="nucleotide sequence ID" value="NM_104377.1"/>
</dbReference>
<dbReference type="FunCoup" id="Q9C7M1">
    <property type="interactions" value="364"/>
</dbReference>
<dbReference type="PaxDb" id="3702-AT1G55030.1"/>
<dbReference type="DNASU" id="841945"/>
<dbReference type="EnsemblPlants" id="AT1G55030.1">
    <property type="protein sequence ID" value="AT1G55030.1"/>
    <property type="gene ID" value="AT1G55030"/>
</dbReference>
<dbReference type="GeneID" id="841945"/>
<dbReference type="Gramene" id="AT1G55030.1">
    <property type="protein sequence ID" value="AT1G55030.1"/>
    <property type="gene ID" value="AT1G55030"/>
</dbReference>
<dbReference type="KEGG" id="ath:AT1G55030"/>
<dbReference type="Araport" id="AT1G55030"/>
<dbReference type="TAIR" id="AT1G55030"/>
<dbReference type="HOGENOM" id="CLU_010721_1_2_1"/>
<dbReference type="InParanoid" id="Q9C7M1"/>
<dbReference type="OMA" id="WHCEKEY"/>
<dbReference type="PhylomeDB" id="Q9C7M1"/>
<dbReference type="PRO" id="PR:Q9C7M1"/>
<dbReference type="Proteomes" id="UP000006548">
    <property type="component" value="Chromosome 1"/>
</dbReference>
<dbReference type="ExpressionAtlas" id="Q9C7M1">
    <property type="expression patterns" value="baseline and differential"/>
</dbReference>
<dbReference type="CDD" id="cd22160">
    <property type="entry name" value="F-box_AtFBL13-like"/>
    <property type="match status" value="1"/>
</dbReference>
<dbReference type="Gene3D" id="3.80.10.10">
    <property type="entry name" value="Ribonuclease Inhibitor"/>
    <property type="match status" value="1"/>
</dbReference>
<dbReference type="InterPro" id="IPR036047">
    <property type="entry name" value="F-box-like_dom_sf"/>
</dbReference>
<dbReference type="InterPro" id="IPR053781">
    <property type="entry name" value="F-box_AtFBL13-like"/>
</dbReference>
<dbReference type="InterPro" id="IPR001810">
    <property type="entry name" value="F-box_dom"/>
</dbReference>
<dbReference type="InterPro" id="IPR006566">
    <property type="entry name" value="FBD"/>
</dbReference>
<dbReference type="InterPro" id="IPR050232">
    <property type="entry name" value="FBL13/AtMIF1-like"/>
</dbReference>
<dbReference type="InterPro" id="IPR032675">
    <property type="entry name" value="LRR_dom_sf"/>
</dbReference>
<dbReference type="InterPro" id="IPR055411">
    <property type="entry name" value="LRR_FXL15/At3g58940/PEG3-like"/>
</dbReference>
<dbReference type="PANTHER" id="PTHR31900:SF34">
    <property type="entry name" value="EMB|CAB62440.1-RELATED"/>
    <property type="match status" value="1"/>
</dbReference>
<dbReference type="PANTHER" id="PTHR31900">
    <property type="entry name" value="F-BOX/RNI SUPERFAMILY PROTEIN-RELATED"/>
    <property type="match status" value="1"/>
</dbReference>
<dbReference type="Pfam" id="PF00646">
    <property type="entry name" value="F-box"/>
    <property type="match status" value="1"/>
</dbReference>
<dbReference type="Pfam" id="PF08387">
    <property type="entry name" value="FBD"/>
    <property type="match status" value="1"/>
</dbReference>
<dbReference type="Pfam" id="PF24758">
    <property type="entry name" value="LRR_At5g56370"/>
    <property type="match status" value="1"/>
</dbReference>
<dbReference type="SMART" id="SM00579">
    <property type="entry name" value="FBD"/>
    <property type="match status" value="1"/>
</dbReference>
<dbReference type="SUPFAM" id="SSF81383">
    <property type="entry name" value="F-box domain"/>
    <property type="match status" value="1"/>
</dbReference>
<dbReference type="SUPFAM" id="SSF52058">
    <property type="entry name" value="L domain-like"/>
    <property type="match status" value="1"/>
</dbReference>
<dbReference type="PROSITE" id="PS50181">
    <property type="entry name" value="FBOX"/>
    <property type="match status" value="1"/>
</dbReference>
<keyword id="KW-0433">Leucine-rich repeat</keyword>
<keyword id="KW-1185">Reference proteome</keyword>
<keyword id="KW-0677">Repeat</keyword>
<accession>Q9C7M1</accession>
<feature type="chain" id="PRO_0000283135" description="Putative FBD-associated F-box protein At1g55030">
    <location>
        <begin position="1"/>
        <end position="422"/>
    </location>
</feature>
<feature type="domain" description="F-box" evidence="1">
    <location>
        <begin position="8"/>
        <end position="60"/>
    </location>
</feature>
<feature type="repeat" description="LRR 1">
    <location>
        <begin position="132"/>
        <end position="153"/>
    </location>
</feature>
<feature type="repeat" description="LRR 2">
    <location>
        <begin position="154"/>
        <end position="175"/>
    </location>
</feature>
<feature type="repeat" description="LRR 3">
    <location>
        <begin position="180"/>
        <end position="201"/>
    </location>
</feature>
<feature type="domain" description="FBD">
    <location>
        <begin position="342"/>
        <end position="391"/>
    </location>
</feature>
<proteinExistence type="predicted"/>
<name>FBD2_ARATH</name>